<accession>A6X3G3</accession>
<name>APNL_BRUA4</name>
<sequence>MSNVDPFLLYGTRETEAKPTHLKAGLLSLDLNDGNLRTITYDGVEVLRAVSYLVRDRDWGTYNPQIHDLNVEQSDSGFIVTYQARCEGPDATKLTIDVCIQAKSGGTLTFDAVANTATGFETNRCGFCILHPIVGVAGSPVRVEHVDGTLDRTQLPYLIEPWQPFKDMRAITHEAMPGVTAECRMEGDTFEMEDQRNWSDASYKTYVRPLALPWPYQIEASKPQHQRIVLNISDTRKAALQAGMNAEPVSITLGNTSGKLPNIGIIITPEEAKASLAAIDLLQEIDPQDLLFQYDPMAGHNGSAFADFATLAAKHSARVSLEIALPCEKSLIEETTAIASDMKAAGFNPDAVIVSPAIDRQSTPPGSEWPTCPPLEDVYAAARAAFPNARLGGGMLSYFTELNRKCVPGELVDFVTHCTNPIVHAADDLSVMQTLEALPFITRSVRAVYGDKPYRIGPSTIPMRQNPYGSRTMENPNGKRIAMANRDPRHNGKFAESFALAYAISVLNAGLDSLTLSALTGPFGLTAGEGEPTLAGGKRPLFTTIKTLSGLAGKDWWQLISSRPDHVLAFATEHEFWLVNITSQPQTVSIAQFAKITLDPYAVQNLKRS</sequence>
<comment type="function">
    <text evidence="1">Involved in catabolism of D-apiose. Hydrolyzes D-apionolactone to D-apionate.</text>
</comment>
<comment type="catalytic activity">
    <reaction evidence="1">
        <text>D-apionolactone + H2O = D-apionate + H(+)</text>
        <dbReference type="Rhea" id="RHEA:57064"/>
        <dbReference type="ChEBI" id="CHEBI:15377"/>
        <dbReference type="ChEBI" id="CHEBI:15378"/>
        <dbReference type="ChEBI" id="CHEBI:141216"/>
        <dbReference type="ChEBI" id="CHEBI:141352"/>
        <dbReference type="EC" id="3.1.1.115"/>
    </reaction>
</comment>
<comment type="pathway">
    <text evidence="1">Carbohydrate metabolism.</text>
</comment>
<gene>
    <name evidence="2" type="primary">apnL</name>
    <name evidence="3" type="ordered locus">Oant_3059</name>
</gene>
<proteinExistence type="evidence at protein level"/>
<feature type="chain" id="PRO_0000446044" description="D-apionate lactonase">
    <location>
        <begin position="1"/>
        <end position="609"/>
    </location>
</feature>
<evidence type="ECO:0000269" key="1">
    <source>
    </source>
</evidence>
<evidence type="ECO:0000303" key="2">
    <source>
    </source>
</evidence>
<evidence type="ECO:0000312" key="3">
    <source>
        <dbReference type="EMBL" id="ABS15767.1"/>
    </source>
</evidence>
<dbReference type="EC" id="3.1.1.115" evidence="1"/>
<dbReference type="EMBL" id="CP000759">
    <property type="protein sequence ID" value="ABS15767.1"/>
    <property type="molecule type" value="Genomic_DNA"/>
</dbReference>
<dbReference type="RefSeq" id="WP_011982774.1">
    <property type="nucleotide sequence ID" value="NC_009668.1"/>
</dbReference>
<dbReference type="SMR" id="A6X3G3"/>
<dbReference type="STRING" id="439375.Oant_3059"/>
<dbReference type="KEGG" id="oan:Oant_3059"/>
<dbReference type="PATRIC" id="fig|439375.7.peg.3210"/>
<dbReference type="eggNOG" id="ENOG502Z7Y3">
    <property type="taxonomic scope" value="Bacteria"/>
</dbReference>
<dbReference type="HOGENOM" id="CLU_030797_0_0_5"/>
<dbReference type="BioCyc" id="MetaCyc:MONOMER-20959"/>
<dbReference type="BRENDA" id="3.1.1.115">
    <property type="organism ID" value="4382"/>
</dbReference>
<dbReference type="Proteomes" id="UP000002301">
    <property type="component" value="Chromosome 2"/>
</dbReference>
<dbReference type="GO" id="GO:0016787">
    <property type="term" value="F:hydrolase activity"/>
    <property type="evidence" value="ECO:0007669"/>
    <property type="project" value="UniProtKB-KW"/>
</dbReference>
<reference key="1">
    <citation type="journal article" date="2011" name="J. Bacteriol.">
        <title>Genome of Ochrobactrum anthropi ATCC 49188 T, a versatile opportunistic pathogen and symbiont of several eukaryotic hosts.</title>
        <authorList>
            <person name="Chain P.S."/>
            <person name="Lang D.M."/>
            <person name="Comerci D.J."/>
            <person name="Malfatti S.A."/>
            <person name="Vergez L.M."/>
            <person name="Shin M."/>
            <person name="Ugalde R.A."/>
            <person name="Garcia E."/>
            <person name="Tolmasky M.E."/>
        </authorList>
    </citation>
    <scope>NUCLEOTIDE SEQUENCE [LARGE SCALE GENOMIC DNA]</scope>
    <source>
        <strain>ATCC 49188 / DSM 6882 / CCUG 24695 / JCM 21032 / LMG 3331 / NBRC 15819 / NCTC 12168 / Alc 37</strain>
    </source>
</reference>
<reference key="2">
    <citation type="journal article" date="2018" name="Nat. Chem. Biol.">
        <title>Functional assignment of multiple catabolic pathways for D-apiose.</title>
        <authorList>
            <person name="Carter M.S."/>
            <person name="Zhang X."/>
            <person name="Huang H."/>
            <person name="Bouvier J.T."/>
            <person name="Francisco B.S."/>
            <person name="Vetting M.W."/>
            <person name="Al-Obaidi N."/>
            <person name="Bonanno J.B."/>
            <person name="Ghosh A."/>
            <person name="Zallot R.G."/>
            <person name="Andersen H.M."/>
            <person name="Almo S.C."/>
            <person name="Gerlt J.A."/>
        </authorList>
    </citation>
    <scope>FUNCTION</scope>
    <scope>CATALYTIC ACTIVITY</scope>
    <scope>PATHWAY</scope>
</reference>
<keyword id="KW-0119">Carbohydrate metabolism</keyword>
<keyword id="KW-0378">Hydrolase</keyword>
<keyword id="KW-1185">Reference proteome</keyword>
<organism>
    <name type="scientific">Brucella anthropi (strain ATCC 49188 / DSM 6882 / CCUG 24695 / JCM 21032 / LMG 3331 / NBRC 15819 / NCTC 12168 / Alc 37)</name>
    <name type="common">Ochrobactrum anthropi</name>
    <dbReference type="NCBI Taxonomy" id="439375"/>
    <lineage>
        <taxon>Bacteria</taxon>
        <taxon>Pseudomonadati</taxon>
        <taxon>Pseudomonadota</taxon>
        <taxon>Alphaproteobacteria</taxon>
        <taxon>Hyphomicrobiales</taxon>
        <taxon>Brucellaceae</taxon>
        <taxon>Brucella/Ochrobactrum group</taxon>
        <taxon>Brucella</taxon>
    </lineage>
</organism>
<protein>
    <recommendedName>
        <fullName evidence="2">D-apionate lactonase</fullName>
        <ecNumber evidence="1">3.1.1.115</ecNumber>
    </recommendedName>
</protein>